<keyword id="KW-0997">Cell inner membrane</keyword>
<keyword id="KW-1003">Cell membrane</keyword>
<keyword id="KW-0472">Membrane</keyword>
<keyword id="KW-1185">Reference proteome</keyword>
<keyword id="KW-0812">Transmembrane</keyword>
<keyword id="KW-1133">Transmembrane helix</keyword>
<sequence length="450" mass="51493">MSLLQFSGLFVVWLLCTLFIATLTWFEFRRVRFNFNVFFSLLFLLTFFFGFPLTSVLVFRFDVGVAPPEILLQALLSAGCFYAVYYVTYKTRLRKRVADAPRRPLFTMNRVETNLTWVILMGIALVSVGIFFMHNGFLLFRLNSYSQIFSSEVSGVALKRFFYFFIPAMLVVYFLRQDSKAWLFFLVSTVAFGLLTYMIVGGTRANIIIAFAIFLFIGIIRGWISLWMLAAAGVLGIVGMFWLALKRYGMNVSGDEAFYTFLYLTRDTFSPWENLALLLQNYDNIDFQGLAPIVRDFYVFIPSWLWPGRPSMVLNSANYFTWEVLNNHSGLAISPTLIGSLVVMGGALFIPLGAIVVGLIIKWFDWLYELGNRETNRYKAAILHSFCFGAIFNMIVLAREGLDSFVSRVVFFIVVFGACLMIAKLLYWLFESAGLIHKRTKSSLRTQVEG</sequence>
<comment type="function">
    <text evidence="1">Probably involved in the polymerization of enterobacterial common antigen (ECA) trisaccharide repeat units.</text>
</comment>
<comment type="pathway">
    <text evidence="1">Bacterial outer membrane biogenesis; enterobacterial common antigen biosynthesis.</text>
</comment>
<comment type="subunit">
    <text evidence="1">Probably part of a complex composed of WzxE, WzyE and WzzE.</text>
</comment>
<comment type="subcellular location">
    <subcellularLocation>
        <location evidence="1">Cell inner membrane</location>
        <topology evidence="1">Multi-pass membrane protein</topology>
    </subcellularLocation>
</comment>
<comment type="similarity">
    <text evidence="1">Belongs to the WzyE family.</text>
</comment>
<protein>
    <recommendedName>
        <fullName evidence="1">Probable ECA polymerase</fullName>
    </recommendedName>
</protein>
<reference key="1">
    <citation type="journal article" date="2009" name="PLoS Genet.">
        <title>Organised genome dynamics in the Escherichia coli species results in highly diverse adaptive paths.</title>
        <authorList>
            <person name="Touchon M."/>
            <person name="Hoede C."/>
            <person name="Tenaillon O."/>
            <person name="Barbe V."/>
            <person name="Baeriswyl S."/>
            <person name="Bidet P."/>
            <person name="Bingen E."/>
            <person name="Bonacorsi S."/>
            <person name="Bouchier C."/>
            <person name="Bouvet O."/>
            <person name="Calteau A."/>
            <person name="Chiapello H."/>
            <person name="Clermont O."/>
            <person name="Cruveiller S."/>
            <person name="Danchin A."/>
            <person name="Diard M."/>
            <person name="Dossat C."/>
            <person name="Karoui M.E."/>
            <person name="Frapy E."/>
            <person name="Garry L."/>
            <person name="Ghigo J.M."/>
            <person name="Gilles A.M."/>
            <person name="Johnson J."/>
            <person name="Le Bouguenec C."/>
            <person name="Lescat M."/>
            <person name="Mangenot S."/>
            <person name="Martinez-Jehanne V."/>
            <person name="Matic I."/>
            <person name="Nassif X."/>
            <person name="Oztas S."/>
            <person name="Petit M.A."/>
            <person name="Pichon C."/>
            <person name="Rouy Z."/>
            <person name="Ruf C.S."/>
            <person name="Schneider D."/>
            <person name="Tourret J."/>
            <person name="Vacherie B."/>
            <person name="Vallenet D."/>
            <person name="Medigue C."/>
            <person name="Rocha E.P.C."/>
            <person name="Denamur E."/>
        </authorList>
    </citation>
    <scope>NUCLEOTIDE SEQUENCE [LARGE SCALE GENOMIC DNA]</scope>
    <source>
        <strain>S88 / ExPEC</strain>
    </source>
</reference>
<name>WZYE_ECO45</name>
<evidence type="ECO:0000255" key="1">
    <source>
        <dbReference type="HAMAP-Rule" id="MF_01003"/>
    </source>
</evidence>
<gene>
    <name evidence="1" type="primary">wzyE</name>
    <name type="ordered locus">ECS88_4217</name>
</gene>
<feature type="chain" id="PRO_1000200208" description="Probable ECA polymerase">
    <location>
        <begin position="1"/>
        <end position="450"/>
    </location>
</feature>
<feature type="transmembrane region" description="Helical" evidence="1">
    <location>
        <begin position="6"/>
        <end position="26"/>
    </location>
</feature>
<feature type="transmembrane region" description="Helical" evidence="1">
    <location>
        <begin position="37"/>
        <end position="57"/>
    </location>
</feature>
<feature type="transmembrane region" description="Helical" evidence="1">
    <location>
        <begin position="63"/>
        <end position="83"/>
    </location>
</feature>
<feature type="transmembrane region" description="Helical" evidence="1">
    <location>
        <begin position="118"/>
        <end position="138"/>
    </location>
</feature>
<feature type="transmembrane region" description="Helical" evidence="1">
    <location>
        <begin position="155"/>
        <end position="175"/>
    </location>
</feature>
<feature type="transmembrane region" description="Helical" evidence="1">
    <location>
        <begin position="181"/>
        <end position="201"/>
    </location>
</feature>
<feature type="transmembrane region" description="Helical" evidence="1">
    <location>
        <begin position="207"/>
        <end position="227"/>
    </location>
</feature>
<feature type="transmembrane region" description="Helical" evidence="1">
    <location>
        <begin position="228"/>
        <end position="248"/>
    </location>
</feature>
<feature type="transmembrane region" description="Helical" evidence="1">
    <location>
        <begin position="341"/>
        <end position="361"/>
    </location>
</feature>
<feature type="transmembrane region" description="Helical" evidence="1">
    <location>
        <begin position="378"/>
        <end position="398"/>
    </location>
</feature>
<feature type="transmembrane region" description="Helical" evidence="1">
    <location>
        <begin position="410"/>
        <end position="430"/>
    </location>
</feature>
<dbReference type="EMBL" id="CU928161">
    <property type="protein sequence ID" value="CAR05412.1"/>
    <property type="molecule type" value="Genomic_DNA"/>
</dbReference>
<dbReference type="RefSeq" id="WP_000055119.1">
    <property type="nucleotide sequence ID" value="NC_011742.1"/>
</dbReference>
<dbReference type="KEGG" id="ecz:ECS88_4217"/>
<dbReference type="HOGENOM" id="CLU_049711_0_0_6"/>
<dbReference type="UniPathway" id="UPA00566"/>
<dbReference type="Proteomes" id="UP000000747">
    <property type="component" value="Chromosome"/>
</dbReference>
<dbReference type="GO" id="GO:0005886">
    <property type="term" value="C:plasma membrane"/>
    <property type="evidence" value="ECO:0007669"/>
    <property type="project" value="UniProtKB-SubCell"/>
</dbReference>
<dbReference type="GO" id="GO:0009246">
    <property type="term" value="P:enterobacterial common antigen biosynthetic process"/>
    <property type="evidence" value="ECO:0007669"/>
    <property type="project" value="UniProtKB-UniRule"/>
</dbReference>
<dbReference type="HAMAP" id="MF_01003">
    <property type="entry name" value="WzyE"/>
    <property type="match status" value="1"/>
</dbReference>
<dbReference type="InterPro" id="IPR010691">
    <property type="entry name" value="WzyE"/>
</dbReference>
<dbReference type="NCBIfam" id="NF002820">
    <property type="entry name" value="PRK02975.1"/>
    <property type="match status" value="1"/>
</dbReference>
<dbReference type="Pfam" id="PF06899">
    <property type="entry name" value="WzyE"/>
    <property type="match status" value="1"/>
</dbReference>
<accession>B7MH58</accession>
<organism>
    <name type="scientific">Escherichia coli O45:K1 (strain S88 / ExPEC)</name>
    <dbReference type="NCBI Taxonomy" id="585035"/>
    <lineage>
        <taxon>Bacteria</taxon>
        <taxon>Pseudomonadati</taxon>
        <taxon>Pseudomonadota</taxon>
        <taxon>Gammaproteobacteria</taxon>
        <taxon>Enterobacterales</taxon>
        <taxon>Enterobacteriaceae</taxon>
        <taxon>Escherichia</taxon>
    </lineage>
</organism>
<proteinExistence type="inferred from homology"/>